<reference key="1">
    <citation type="submission" date="2007-08" db="EMBL/GenBank/DDBJ databases">
        <authorList>
            <consortium name="The Citrobacter koseri Genome Sequencing Project"/>
            <person name="McClelland M."/>
            <person name="Sanderson E.K."/>
            <person name="Porwollik S."/>
            <person name="Spieth J."/>
            <person name="Clifton W.S."/>
            <person name="Latreille P."/>
            <person name="Courtney L."/>
            <person name="Wang C."/>
            <person name="Pepin K."/>
            <person name="Bhonagiri V."/>
            <person name="Nash W."/>
            <person name="Johnson M."/>
            <person name="Thiruvilangam P."/>
            <person name="Wilson R."/>
        </authorList>
    </citation>
    <scope>NUCLEOTIDE SEQUENCE [LARGE SCALE GENOMIC DNA]</scope>
    <source>
        <strain>ATCC BAA-895 / CDC 4225-83 / SGSC4696</strain>
    </source>
</reference>
<proteinExistence type="inferred from homology"/>
<dbReference type="EC" id="5.4.99.27" evidence="1"/>
<dbReference type="EMBL" id="CP000822">
    <property type="protein sequence ID" value="ABV15172.1"/>
    <property type="molecule type" value="Genomic_DNA"/>
</dbReference>
<dbReference type="RefSeq" id="WP_012134861.1">
    <property type="nucleotide sequence ID" value="NC_009792.1"/>
</dbReference>
<dbReference type="SMR" id="A8ANV9"/>
<dbReference type="STRING" id="290338.CKO_04106"/>
<dbReference type="GeneID" id="45137743"/>
<dbReference type="KEGG" id="cko:CKO_04106"/>
<dbReference type="HOGENOM" id="CLU_005281_4_0_6"/>
<dbReference type="OrthoDB" id="1550679at2"/>
<dbReference type="Proteomes" id="UP000008148">
    <property type="component" value="Chromosome"/>
</dbReference>
<dbReference type="GO" id="GO:0005829">
    <property type="term" value="C:cytosol"/>
    <property type="evidence" value="ECO:0007669"/>
    <property type="project" value="TreeGrafter"/>
</dbReference>
<dbReference type="GO" id="GO:0003723">
    <property type="term" value="F:RNA binding"/>
    <property type="evidence" value="ECO:0007669"/>
    <property type="project" value="InterPro"/>
</dbReference>
<dbReference type="GO" id="GO:0160150">
    <property type="term" value="F:tRNA pseudouridine(13) synthase activity"/>
    <property type="evidence" value="ECO:0007669"/>
    <property type="project" value="UniProtKB-EC"/>
</dbReference>
<dbReference type="GO" id="GO:0031119">
    <property type="term" value="P:tRNA pseudouridine synthesis"/>
    <property type="evidence" value="ECO:0007669"/>
    <property type="project" value="UniProtKB-UniRule"/>
</dbReference>
<dbReference type="CDD" id="cd02575">
    <property type="entry name" value="PseudoU_synth_EcTruD"/>
    <property type="match status" value="1"/>
</dbReference>
<dbReference type="FunFam" id="3.30.2340.10:FF:000001">
    <property type="entry name" value="tRNA pseudouridine synthase D"/>
    <property type="match status" value="1"/>
</dbReference>
<dbReference type="FunFam" id="3.30.2350.20:FF:000001">
    <property type="entry name" value="tRNA pseudouridine synthase D"/>
    <property type="match status" value="1"/>
</dbReference>
<dbReference type="Gene3D" id="3.30.2350.20">
    <property type="entry name" value="TruD, catalytic domain"/>
    <property type="match status" value="1"/>
</dbReference>
<dbReference type="Gene3D" id="3.30.2340.10">
    <property type="entry name" value="TruD, insertion domain"/>
    <property type="match status" value="1"/>
</dbReference>
<dbReference type="HAMAP" id="MF_01082">
    <property type="entry name" value="TruD"/>
    <property type="match status" value="1"/>
</dbReference>
<dbReference type="InterPro" id="IPR020103">
    <property type="entry name" value="PsdUridine_synth_cat_dom_sf"/>
</dbReference>
<dbReference type="InterPro" id="IPR001656">
    <property type="entry name" value="PsdUridine_synth_TruD"/>
</dbReference>
<dbReference type="InterPro" id="IPR020119">
    <property type="entry name" value="PsdUridine_synth_TruD_CS"/>
</dbReference>
<dbReference type="InterPro" id="IPR011760">
    <property type="entry name" value="PsdUridine_synth_TruD_insert"/>
</dbReference>
<dbReference type="InterPro" id="IPR042214">
    <property type="entry name" value="TruD_catalytic"/>
</dbReference>
<dbReference type="InterPro" id="IPR043165">
    <property type="entry name" value="TruD_insert_sf"/>
</dbReference>
<dbReference type="InterPro" id="IPR050170">
    <property type="entry name" value="TruD_pseudoU_synthase"/>
</dbReference>
<dbReference type="NCBIfam" id="NF002155">
    <property type="entry name" value="PRK00984.1-4"/>
    <property type="match status" value="1"/>
</dbReference>
<dbReference type="NCBIfam" id="TIGR00094">
    <property type="entry name" value="tRNA_TruD_broad"/>
    <property type="match status" value="1"/>
</dbReference>
<dbReference type="PANTHER" id="PTHR47811">
    <property type="entry name" value="TRNA PSEUDOURIDINE SYNTHASE D"/>
    <property type="match status" value="1"/>
</dbReference>
<dbReference type="PANTHER" id="PTHR47811:SF1">
    <property type="entry name" value="TRNA PSEUDOURIDINE SYNTHASE D"/>
    <property type="match status" value="1"/>
</dbReference>
<dbReference type="Pfam" id="PF01142">
    <property type="entry name" value="TruD"/>
    <property type="match status" value="2"/>
</dbReference>
<dbReference type="SUPFAM" id="SSF55120">
    <property type="entry name" value="Pseudouridine synthase"/>
    <property type="match status" value="1"/>
</dbReference>
<dbReference type="PROSITE" id="PS50984">
    <property type="entry name" value="TRUD"/>
    <property type="match status" value="1"/>
</dbReference>
<dbReference type="PROSITE" id="PS01268">
    <property type="entry name" value="UPF0024"/>
    <property type="match status" value="1"/>
</dbReference>
<organism>
    <name type="scientific">Citrobacter koseri (strain ATCC BAA-895 / CDC 4225-83 / SGSC4696)</name>
    <dbReference type="NCBI Taxonomy" id="290338"/>
    <lineage>
        <taxon>Bacteria</taxon>
        <taxon>Pseudomonadati</taxon>
        <taxon>Pseudomonadota</taxon>
        <taxon>Gammaproteobacteria</taxon>
        <taxon>Enterobacterales</taxon>
        <taxon>Enterobacteriaceae</taxon>
        <taxon>Citrobacter</taxon>
    </lineage>
</organism>
<accession>A8ANV9</accession>
<sequence length="349" mass="39258">MTEFENLTYLHGKPQGAGLLKANPEDFVVVEDLGFEPDGEGEHILVRILKNGCNTRFVADALAKFLKIHAREVSFAGQKDKHAVTEQWLCARVPGKEMPDLSAFQIEGCKVLEYARHKRKLRLGALKGNAFTLVLREVSHRDDVEARLQAINTRGVPNYFGAQRFGIGGSNLQGALRWAQSNAPVRDRNKRSFWLSAARSALFNQIVNERVKKPDFNQVVDGDALQLAGRGSWFVATQEEQAELQRRVDEKELMITAALPGSGEWGTLRDALAFEEAAIADEGELQSLLLREKVEAARRAMLLYPQQLRWNWWDDVTVELRFWLPAGSFATSVVRELINTMGDYAHIAE</sequence>
<protein>
    <recommendedName>
        <fullName evidence="1">tRNA pseudouridine synthase D</fullName>
        <ecNumber evidence="1">5.4.99.27</ecNumber>
    </recommendedName>
    <alternativeName>
        <fullName evidence="1">tRNA pseudouridine(13) synthase</fullName>
    </alternativeName>
    <alternativeName>
        <fullName evidence="1">tRNA pseudouridylate synthase D</fullName>
    </alternativeName>
    <alternativeName>
        <fullName evidence="1">tRNA-uridine isomerase D</fullName>
    </alternativeName>
</protein>
<name>TRUD_CITK8</name>
<feature type="chain" id="PRO_1000084733" description="tRNA pseudouridine synthase D">
    <location>
        <begin position="1"/>
        <end position="349"/>
    </location>
</feature>
<feature type="domain" description="TRUD" evidence="1">
    <location>
        <begin position="155"/>
        <end position="303"/>
    </location>
</feature>
<feature type="active site" description="Nucleophile" evidence="1">
    <location>
        <position position="80"/>
    </location>
</feature>
<feature type="binding site" evidence="1">
    <location>
        <position position="27"/>
    </location>
    <ligand>
        <name>substrate</name>
    </ligand>
</feature>
<feature type="binding site" evidence="1">
    <location>
        <position position="129"/>
    </location>
    <ligand>
        <name>substrate</name>
    </ligand>
</feature>
<feature type="binding site" evidence="1">
    <location>
        <position position="329"/>
    </location>
    <ligand>
        <name>substrate</name>
    </ligand>
</feature>
<evidence type="ECO:0000255" key="1">
    <source>
        <dbReference type="HAMAP-Rule" id="MF_01082"/>
    </source>
</evidence>
<keyword id="KW-0413">Isomerase</keyword>
<keyword id="KW-1185">Reference proteome</keyword>
<keyword id="KW-0819">tRNA processing</keyword>
<gene>
    <name evidence="1" type="primary">truD</name>
    <name type="ordered locus">CKO_04106</name>
</gene>
<comment type="function">
    <text evidence="1">Responsible for synthesis of pseudouridine from uracil-13 in transfer RNAs.</text>
</comment>
<comment type="catalytic activity">
    <reaction evidence="1">
        <text>uridine(13) in tRNA = pseudouridine(13) in tRNA</text>
        <dbReference type="Rhea" id="RHEA:42540"/>
        <dbReference type="Rhea" id="RHEA-COMP:10105"/>
        <dbReference type="Rhea" id="RHEA-COMP:10106"/>
        <dbReference type="ChEBI" id="CHEBI:65314"/>
        <dbReference type="ChEBI" id="CHEBI:65315"/>
        <dbReference type="EC" id="5.4.99.27"/>
    </reaction>
</comment>
<comment type="similarity">
    <text evidence="1">Belongs to the pseudouridine synthase TruD family.</text>
</comment>